<organism>
    <name type="scientific">Dictyostelium discoideum</name>
    <name type="common">Social amoeba</name>
    <dbReference type="NCBI Taxonomy" id="44689"/>
    <lineage>
        <taxon>Eukaryota</taxon>
        <taxon>Amoebozoa</taxon>
        <taxon>Evosea</taxon>
        <taxon>Eumycetozoa</taxon>
        <taxon>Dictyostelia</taxon>
        <taxon>Dictyosteliales</taxon>
        <taxon>Dictyosteliaceae</taxon>
        <taxon>Dictyostelium</taxon>
    </lineage>
</organism>
<protein>
    <recommendedName>
        <fullName>Discoidin-1 subunit B/C</fullName>
    </recommendedName>
    <alternativeName>
        <fullName>Discoidin I chain C/D</fullName>
    </alternativeName>
    <alternativeName>
        <fullName>Discoidin-1 subunit beta/gamma</fullName>
    </alternativeName>
</protein>
<sequence>MSTQGLVQLISNAQCHLRTSTNYNDVHTQFNAVLNYKNKGTNTIDGSEAWCSSIVDTNQYIVAGCEVPRTFMCVALQGRGDHDQWVTSYKIRYSLDNVTWSEYRNGAAITGVTDRNTVVNHFFDTPIRARSIAIHPLTWNNHISLRCEFYTQPVQSSVTQVGADIYTGDNCALNTGSGKREVVVPVKFQFEFATLPKVALNFDQIDCTDATNQTRIGVQPRNITTKGFDCVFYTWNANKVYSLRADYIATALE</sequence>
<proteinExistence type="evidence at protein level"/>
<accession>P02887</accession>
<accession>Q556R2</accession>
<comment type="function">
    <text>Galactose- and N-acetylgalactosamine-binding lectin. May play a role in cell-substratum adhesion rather than in cell-cell adhesion. May be necessary for the maintenance of normal elongate morphology during aggregation.</text>
</comment>
<comment type="subunit">
    <text>Tetramer of four different chains (A to D).</text>
</comment>
<comment type="subcellular location">
    <subcellularLocation>
        <location>Cytoplasm</location>
    </subcellularLocation>
</comment>
<comment type="tissue specificity">
    <text>Stalk cells.</text>
</comment>
<comment type="caution">
    <text evidence="3">The gene for this protein is duplicated in strains AX3 and AX4. These strains contain a duplication of a segment of 750 kb of chromosome 2 compared to the corresponding sequence in strain AX2.</text>
</comment>
<name>DIS1B_DICDI</name>
<keyword id="KW-0007">Acetylation</keyword>
<keyword id="KW-0130">Cell adhesion</keyword>
<keyword id="KW-0963">Cytoplasm</keyword>
<keyword id="KW-0903">Direct protein sequencing</keyword>
<keyword id="KW-0430">Lectin</keyword>
<keyword id="KW-1185">Reference proteome</keyword>
<evidence type="ECO:0000255" key="1">
    <source>
        <dbReference type="PROSITE-ProRule" id="PRU00081"/>
    </source>
</evidence>
<evidence type="ECO:0000269" key="2">
    <source ref="4"/>
</evidence>
<evidence type="ECO:0000305" key="3"/>
<dbReference type="EMBL" id="J01284">
    <property type="protein sequence ID" value="AAA33199.1"/>
    <property type="molecule type" value="Genomic_DNA"/>
</dbReference>
<dbReference type="EMBL" id="J01283">
    <property type="protein sequence ID" value="AAA33198.1"/>
    <property type="molecule type" value="Genomic_DNA"/>
</dbReference>
<dbReference type="EMBL" id="AAFI02000011">
    <property type="protein sequence ID" value="EAL70633.1"/>
    <property type="molecule type" value="Genomic_DNA"/>
</dbReference>
<dbReference type="EMBL" id="AAFI02000009">
    <property type="protein sequence ID" value="EAL70750.1"/>
    <property type="molecule type" value="Genomic_DNA"/>
</dbReference>
<dbReference type="PIR" id="A03382">
    <property type="entry name" value="DLDOIC"/>
</dbReference>
<dbReference type="PIR" id="B03382">
    <property type="entry name" value="B03382"/>
</dbReference>
<dbReference type="RefSeq" id="XP_644559.1">
    <property type="nucleotide sequence ID" value="XM_639467.1"/>
</dbReference>
<dbReference type="RefSeq" id="XP_644692.1">
    <property type="nucleotide sequence ID" value="XM_639600.1"/>
</dbReference>
<dbReference type="SMR" id="P02887"/>
<dbReference type="ELM" id="P02887"/>
<dbReference type="FunCoup" id="P02887">
    <property type="interactions" value="6"/>
</dbReference>
<dbReference type="PaxDb" id="44689-DDB0215401"/>
<dbReference type="EnsemblProtists" id="EAL70633">
    <property type="protein sequence ID" value="EAL70633"/>
    <property type="gene ID" value="DDB_G0273885"/>
</dbReference>
<dbReference type="EnsemblProtists" id="EAL70750">
    <property type="protein sequence ID" value="EAL70750"/>
    <property type="gene ID" value="DDB_G0273065"/>
</dbReference>
<dbReference type="GeneID" id="8618789"/>
<dbReference type="GeneID" id="8619187"/>
<dbReference type="KEGG" id="ddi:DDB_G0273065"/>
<dbReference type="KEGG" id="ddi:DDB_G0273885"/>
<dbReference type="dictyBase" id="DDB_G0273065">
    <property type="gene designation" value="dscC-1"/>
</dbReference>
<dbReference type="dictyBase" id="DDB_G0273885">
    <property type="gene designation" value="dscC-2"/>
</dbReference>
<dbReference type="VEuPathDB" id="AmoebaDB:DDB_G0273885"/>
<dbReference type="eggNOG" id="KOG3516">
    <property type="taxonomic scope" value="Eukaryota"/>
</dbReference>
<dbReference type="HOGENOM" id="CLU_1100181_0_0_1"/>
<dbReference type="InParanoid" id="P02887"/>
<dbReference type="OMA" id="IDCANDK"/>
<dbReference type="PhylomeDB" id="P02887"/>
<dbReference type="PRO" id="PR:P02887"/>
<dbReference type="Proteomes" id="UP000002195">
    <property type="component" value="Chromosome 2"/>
</dbReference>
<dbReference type="GO" id="GO:0009986">
    <property type="term" value="C:cell surface"/>
    <property type="evidence" value="ECO:0000314"/>
    <property type="project" value="dictyBase"/>
</dbReference>
<dbReference type="GO" id="GO:0005737">
    <property type="term" value="C:cytoplasm"/>
    <property type="evidence" value="ECO:0000314"/>
    <property type="project" value="dictyBase"/>
</dbReference>
<dbReference type="GO" id="GO:0031012">
    <property type="term" value="C:extracellular matrix"/>
    <property type="evidence" value="ECO:0007005"/>
    <property type="project" value="dictyBase"/>
</dbReference>
<dbReference type="GO" id="GO:0098636">
    <property type="term" value="C:protein complex involved in cell adhesion"/>
    <property type="evidence" value="ECO:0000314"/>
    <property type="project" value="dictyBase"/>
</dbReference>
<dbReference type="GO" id="GO:0030246">
    <property type="term" value="F:carbohydrate binding"/>
    <property type="evidence" value="ECO:0000314"/>
    <property type="project" value="dictyBase"/>
</dbReference>
<dbReference type="GO" id="GO:0046871">
    <property type="term" value="F:N-acetylgalactosamine binding"/>
    <property type="evidence" value="ECO:0000314"/>
    <property type="project" value="dictyBase"/>
</dbReference>
<dbReference type="GO" id="GO:0070492">
    <property type="term" value="F:oligosaccharide binding"/>
    <property type="evidence" value="ECO:0000318"/>
    <property type="project" value="GO_Central"/>
</dbReference>
<dbReference type="GO" id="GO:0030247">
    <property type="term" value="F:polysaccharide binding"/>
    <property type="evidence" value="ECO:0000314"/>
    <property type="project" value="dictyBase"/>
</dbReference>
<dbReference type="GO" id="GO:0007155">
    <property type="term" value="P:cell adhesion"/>
    <property type="evidence" value="ECO:0000314"/>
    <property type="project" value="dictyBase"/>
</dbReference>
<dbReference type="GO" id="GO:0098609">
    <property type="term" value="P:cell-cell adhesion"/>
    <property type="evidence" value="ECO:0000314"/>
    <property type="project" value="dictyBase"/>
</dbReference>
<dbReference type="GO" id="GO:0007010">
    <property type="term" value="P:cytoskeleton organization"/>
    <property type="evidence" value="ECO:0000315"/>
    <property type="project" value="dictyBase"/>
</dbReference>
<dbReference type="GO" id="GO:0051591">
    <property type="term" value="P:response to cAMP"/>
    <property type="evidence" value="ECO:0000314"/>
    <property type="project" value="dictyBase"/>
</dbReference>
<dbReference type="GO" id="GO:0051593">
    <property type="term" value="P:response to folic acid"/>
    <property type="evidence" value="ECO:0000314"/>
    <property type="project" value="dictyBase"/>
</dbReference>
<dbReference type="CDD" id="cd00057">
    <property type="entry name" value="FA58C"/>
    <property type="match status" value="1"/>
</dbReference>
<dbReference type="FunFam" id="2.60.120.260:FF:000016">
    <property type="entry name" value="Contactin-associated protein-like 4 isoform 1"/>
    <property type="match status" value="1"/>
</dbReference>
<dbReference type="FunFam" id="2.60.40.2080:FF:000001">
    <property type="entry name" value="Discoidin-1 subunit A"/>
    <property type="match status" value="1"/>
</dbReference>
<dbReference type="Gene3D" id="2.60.40.2080">
    <property type="match status" value="1"/>
</dbReference>
<dbReference type="Gene3D" id="2.60.120.260">
    <property type="entry name" value="Galactose-binding domain-like"/>
    <property type="match status" value="1"/>
</dbReference>
<dbReference type="InterPro" id="IPR000421">
    <property type="entry name" value="FA58C"/>
</dbReference>
<dbReference type="InterPro" id="IPR008979">
    <property type="entry name" value="Galactose-bd-like_sf"/>
</dbReference>
<dbReference type="InterPro" id="IPR052487">
    <property type="entry name" value="Galactose-binding_lectin"/>
</dbReference>
<dbReference type="InterPro" id="IPR037221">
    <property type="entry name" value="H-type_lectin_dom_sf"/>
</dbReference>
<dbReference type="InterPro" id="IPR019019">
    <property type="entry name" value="H-type_lectin_domain"/>
</dbReference>
<dbReference type="PANTHER" id="PTHR46938:SF1">
    <property type="entry name" value="DISCOIDIN-1 SUBUNIT A-RELATED"/>
    <property type="match status" value="1"/>
</dbReference>
<dbReference type="PANTHER" id="PTHR46938">
    <property type="entry name" value="DISCOIDIN-1 SUBUNIT A-RELATED-RELATED"/>
    <property type="match status" value="1"/>
</dbReference>
<dbReference type="Pfam" id="PF00754">
    <property type="entry name" value="F5_F8_type_C"/>
    <property type="match status" value="1"/>
</dbReference>
<dbReference type="Pfam" id="PF09458">
    <property type="entry name" value="H_lectin"/>
    <property type="match status" value="1"/>
</dbReference>
<dbReference type="SMART" id="SM00231">
    <property type="entry name" value="FA58C"/>
    <property type="match status" value="1"/>
</dbReference>
<dbReference type="SUPFAM" id="SSF141086">
    <property type="entry name" value="Agglutinin HPA-like"/>
    <property type="match status" value="1"/>
</dbReference>
<dbReference type="SUPFAM" id="SSF49785">
    <property type="entry name" value="Galactose-binding domain-like"/>
    <property type="match status" value="1"/>
</dbReference>
<dbReference type="PROSITE" id="PS01285">
    <property type="entry name" value="FA58C_1"/>
    <property type="match status" value="1"/>
</dbReference>
<dbReference type="PROSITE" id="PS50022">
    <property type="entry name" value="FA58C_3"/>
    <property type="match status" value="1"/>
</dbReference>
<reference key="1">
    <citation type="journal article" date="1981" name="J. Mol. Biol.">
        <title>Sequence and expression of the discoidin I gene family in Dictyostelium discoideum.</title>
        <authorList>
            <person name="Poole S."/>
            <person name="Firtel R.A."/>
            <person name="Lamar E."/>
            <person name="Rowekamp W."/>
        </authorList>
    </citation>
    <scope>NUCLEOTIDE SEQUENCE [GENOMIC DNA]</scope>
</reference>
<reference key="2">
    <citation type="journal article" date="2002" name="Nature">
        <title>Sequence and analysis of chromosome 2 of Dictyostelium discoideum.</title>
        <authorList>
            <person name="Gloeckner G."/>
            <person name="Eichinger L."/>
            <person name="Szafranski K."/>
            <person name="Pachebat J.A."/>
            <person name="Bankier A.T."/>
            <person name="Dear P.H."/>
            <person name="Lehmann R."/>
            <person name="Baumgart C."/>
            <person name="Parra G."/>
            <person name="Abril J.F."/>
            <person name="Guigo R."/>
            <person name="Kumpf K."/>
            <person name="Tunggal B."/>
            <person name="Cox E.C."/>
            <person name="Quail M.A."/>
            <person name="Platzer M."/>
            <person name="Rosenthal A."/>
            <person name="Noegel A.A."/>
        </authorList>
    </citation>
    <scope>NUCLEOTIDE SEQUENCE [LARGE SCALE GENOMIC DNA]</scope>
    <source>
        <strain>AX4</strain>
    </source>
</reference>
<reference key="3">
    <citation type="journal article" date="2005" name="Nature">
        <title>The genome of the social amoeba Dictyostelium discoideum.</title>
        <authorList>
            <person name="Eichinger L."/>
            <person name="Pachebat J.A."/>
            <person name="Gloeckner G."/>
            <person name="Rajandream M.A."/>
            <person name="Sucgang R."/>
            <person name="Berriman M."/>
            <person name="Song J."/>
            <person name="Olsen R."/>
            <person name="Szafranski K."/>
            <person name="Xu Q."/>
            <person name="Tunggal B."/>
            <person name="Kummerfeld S."/>
            <person name="Madera M."/>
            <person name="Konfortov B.A."/>
            <person name="Rivero F."/>
            <person name="Bankier A.T."/>
            <person name="Lehmann R."/>
            <person name="Hamlin N."/>
            <person name="Davies R."/>
            <person name="Gaudet P."/>
            <person name="Fey P."/>
            <person name="Pilcher K."/>
            <person name="Chen G."/>
            <person name="Saunders D."/>
            <person name="Sodergren E.J."/>
            <person name="Davis P."/>
            <person name="Kerhornou A."/>
            <person name="Nie X."/>
            <person name="Hall N."/>
            <person name="Anjard C."/>
            <person name="Hemphill L."/>
            <person name="Bason N."/>
            <person name="Farbrother P."/>
            <person name="Desany B."/>
            <person name="Just E."/>
            <person name="Morio T."/>
            <person name="Rost R."/>
            <person name="Churcher C.M."/>
            <person name="Cooper J."/>
            <person name="Haydock S."/>
            <person name="van Driessche N."/>
            <person name="Cronin A."/>
            <person name="Goodhead I."/>
            <person name="Muzny D.M."/>
            <person name="Mourier T."/>
            <person name="Pain A."/>
            <person name="Lu M."/>
            <person name="Harper D."/>
            <person name="Lindsay R."/>
            <person name="Hauser H."/>
            <person name="James K.D."/>
            <person name="Quiles M."/>
            <person name="Madan Babu M."/>
            <person name="Saito T."/>
            <person name="Buchrieser C."/>
            <person name="Wardroper A."/>
            <person name="Felder M."/>
            <person name="Thangavelu M."/>
            <person name="Johnson D."/>
            <person name="Knights A."/>
            <person name="Loulseged H."/>
            <person name="Mungall K.L."/>
            <person name="Oliver K."/>
            <person name="Price C."/>
            <person name="Quail M.A."/>
            <person name="Urushihara H."/>
            <person name="Hernandez J."/>
            <person name="Rabbinowitsch E."/>
            <person name="Steffen D."/>
            <person name="Sanders M."/>
            <person name="Ma J."/>
            <person name="Kohara Y."/>
            <person name="Sharp S."/>
            <person name="Simmonds M.N."/>
            <person name="Spiegler S."/>
            <person name="Tivey A."/>
            <person name="Sugano S."/>
            <person name="White B."/>
            <person name="Walker D."/>
            <person name="Woodward J.R."/>
            <person name="Winckler T."/>
            <person name="Tanaka Y."/>
            <person name="Shaulsky G."/>
            <person name="Schleicher M."/>
            <person name="Weinstock G.M."/>
            <person name="Rosenthal A."/>
            <person name="Cox E.C."/>
            <person name="Chisholm R.L."/>
            <person name="Gibbs R.A."/>
            <person name="Loomis W.F."/>
            <person name="Platzer M."/>
            <person name="Kay R.R."/>
            <person name="Williams J.G."/>
            <person name="Dear P.H."/>
            <person name="Noegel A.A."/>
            <person name="Barrell B.G."/>
            <person name="Kuspa A."/>
        </authorList>
    </citation>
    <scope>NUCLEOTIDE SEQUENCE [LARGE SCALE GENOMIC DNA]</scope>
    <source>
        <strain>AX4</strain>
    </source>
</reference>
<reference key="4">
    <citation type="submission" date="2007-07" db="UniProtKB">
        <authorList>
            <person name="Bienvenut W.V."/>
            <person name="Patel H."/>
            <person name="Brunton V.G."/>
            <person name="Frame M.C."/>
        </authorList>
    </citation>
    <scope>PROTEIN SEQUENCE OF 2-18; 70-79; 105-128; 131-146 AND 188-197</scope>
    <scope>CLEAVAGE OF INITIATOR METHIONINE</scope>
    <scope>ACETYLATION AT SER-2</scope>
    <scope>IDENTIFICATION BY MASS SPECTROMETRY</scope>
</reference>
<reference key="5">
    <citation type="journal article" date="1984" name="Cell">
        <title>Discoidin I is implicated in cell-substratum attachment and ordered cell migration of Dictyostelium discoideum and resembles fibronectin.</title>
        <authorList>
            <person name="Springer W.R."/>
            <person name="Cooper D.N.W."/>
            <person name="Barondes S.H."/>
        </authorList>
    </citation>
    <scope>CELL ATTACHMENT SITE</scope>
</reference>
<reference key="6">
    <citation type="journal article" date="2006" name="Mol. Cell. Proteomics">
        <title>Proteomics fingerprinting of phagosome maturation and evidence for the role of a Galpha during uptake.</title>
        <authorList>
            <person name="Gotthardt D."/>
            <person name="Blancheteau V."/>
            <person name="Bosserhoff A."/>
            <person name="Ruppert T."/>
            <person name="Delorenzi M."/>
            <person name="Soldati T."/>
        </authorList>
    </citation>
    <scope>IDENTIFICATION BY MASS SPECTROMETRY [LARGE SCALE ANALYSIS]</scope>
    <source>
        <strain>AX2</strain>
    </source>
</reference>
<gene>
    <name type="primary">dscC-1</name>
    <name type="synonym">dscB-1</name>
    <name type="ORF">DDB_G0273065</name>
</gene>
<gene>
    <name type="primary">dscC-2</name>
    <name type="synonym">dscB-2</name>
    <name type="ORF">DDB_G0273885</name>
</gene>
<feature type="initiator methionine" description="Removed" evidence="2">
    <location>
        <position position="1"/>
    </location>
</feature>
<feature type="chain" id="PRO_0000079917" description="Discoidin-1 subunit B/C">
    <location>
        <begin position="2"/>
        <end position="253"/>
    </location>
</feature>
<feature type="domain" description="F5/8 type C" evidence="1">
    <location>
        <begin position="2"/>
        <end position="152"/>
    </location>
</feature>
<feature type="short sequence motif" description="Cell attachment site">
    <location>
        <begin position="79"/>
        <end position="81"/>
    </location>
</feature>
<feature type="modified residue" description="N-acetylserine" evidence="2">
    <location>
        <position position="2"/>
    </location>
</feature>